<accession>Q16959</accession>
<evidence type="ECO:0000250" key="1"/>
<evidence type="ECO:0000256" key="2">
    <source>
        <dbReference type="SAM" id="MobiDB-lite"/>
    </source>
</evidence>
<evidence type="ECO:0000305" key="3"/>
<sequence length="702" mass="79138">MPVKSTKTKGGSTQGGSQAGGPSTLKVNKARVPAKGKKDDDDATEAGEHGGEEWMQTKSLIKPDDQLELNDQELKEEFTRILTANNPHAPQNIVRYSFKDCSFKQTSHVDQLAIHFSLDGNMIHKDSDEARRQQQRHGASEAISEQAISEAGEEKKEEDGEQKTEEPKEGEKRDEESTPAPAEAKSDQKLTNQFNFSERASQTYNNPYRERGTQTEPPPRANFSSTANQWEIYDAYMEDLEKQEKAKEKKAAPSKKDDDKSKKKLTALETQSDDMSRISHAAKIIERMVNQNTFDDVSQDFKYYEDMSDEFRDQEGTLLPLWKFSYDKSKRLAVTSVCWNPKYKDLFAVAHGSYDFMKQSRGMILFYTLKNPSFPEFVYPTDSGVMCIDIRPEHPYLICVGYCDGSVGVFNVTSTDANPVFQSTAKTGKHTDPVWQVAWQKDDLDNNLNFFSVSSDGRVVAWTLVKNELTYTDVIQLQLDSAPQDGPEGTQLTPLGCGTCFDFHKQTDYLFLVGTEEGKIHKCSKAYSSQFLDTFEAHHMAVYKVMWNHFHPKIFISCSADWSVKIWDHTYRNGPMFTFDLGSAVGDVAWAPYSSTVFAAVTADGKVHVFDLNLNKYEPICEQAVVQKKKTKLTHITFNPNFPIVLVGDDRGYVSSLKLSPNLRKVPKDKKGAALNHGPEAEIAKMDKLLALVREPPKDNKS</sequence>
<comment type="function">
    <text evidence="1">Microtubule-binding protein that may be involved in dynein outer arm assembly on the axoneme.</text>
</comment>
<comment type="subunit">
    <text>Consists of at least two heavy chains (alpha and beta), three intermediate chains and several light chains.</text>
</comment>
<comment type="subcellular location">
    <subcellularLocation>
        <location evidence="1">Cytoplasm</location>
        <location evidence="1">Cytoskeleton</location>
        <location evidence="1">Cilium axoneme</location>
    </subcellularLocation>
</comment>
<comment type="similarity">
    <text evidence="3">Belongs to the dynein intermediate chain family.</text>
</comment>
<reference key="1">
    <citation type="journal article" date="1995" name="Mol. Biol. Cell">
        <title>Interspecies conservation of outer arm dynein intermediate chain sequences defines two intermediate chain subclasses.</title>
        <authorList>
            <person name="Ogawa K."/>
            <person name="Kamiya R."/>
            <person name="Wilkerson C.G."/>
            <person name="Witman G.B."/>
        </authorList>
    </citation>
    <scope>NUCLEOTIDE SEQUENCE [MRNA]</scope>
    <source>
        <tissue>Egg</tissue>
    </source>
</reference>
<keyword id="KW-0966">Cell projection</keyword>
<keyword id="KW-0969">Cilium</keyword>
<keyword id="KW-0963">Cytoplasm</keyword>
<keyword id="KW-0206">Cytoskeleton</keyword>
<keyword id="KW-0243">Dynein</keyword>
<keyword id="KW-0493">Microtubule</keyword>
<keyword id="KW-0505">Motor protein</keyword>
<keyword id="KW-0677">Repeat</keyword>
<keyword id="KW-0853">WD repeat</keyword>
<dbReference type="EMBL" id="D38538">
    <property type="protein sequence ID" value="BAA07539.1"/>
    <property type="molecule type" value="mRNA"/>
</dbReference>
<dbReference type="SMR" id="Q16959"/>
<dbReference type="GO" id="GO:0005874">
    <property type="term" value="C:microtubule"/>
    <property type="evidence" value="ECO:0007669"/>
    <property type="project" value="UniProtKB-KW"/>
</dbReference>
<dbReference type="GO" id="GO:0036157">
    <property type="term" value="C:outer dynein arm"/>
    <property type="evidence" value="ECO:0007669"/>
    <property type="project" value="TreeGrafter"/>
</dbReference>
<dbReference type="GO" id="GO:0045504">
    <property type="term" value="F:dynein heavy chain binding"/>
    <property type="evidence" value="ECO:0007669"/>
    <property type="project" value="TreeGrafter"/>
</dbReference>
<dbReference type="GO" id="GO:0045503">
    <property type="term" value="F:dynein light chain binding"/>
    <property type="evidence" value="ECO:0007669"/>
    <property type="project" value="TreeGrafter"/>
</dbReference>
<dbReference type="GO" id="GO:0003341">
    <property type="term" value="P:cilium movement"/>
    <property type="evidence" value="ECO:0007669"/>
    <property type="project" value="TreeGrafter"/>
</dbReference>
<dbReference type="GO" id="GO:0036158">
    <property type="term" value="P:outer dynein arm assembly"/>
    <property type="evidence" value="ECO:0007669"/>
    <property type="project" value="TreeGrafter"/>
</dbReference>
<dbReference type="FunFam" id="2.130.10.10:FF:000251">
    <property type="entry name" value="Dynein axonemal intermediate chain 1"/>
    <property type="match status" value="1"/>
</dbReference>
<dbReference type="FunFam" id="2.130.10.10:FF:000349">
    <property type="entry name" value="Dynein axonemal intermediate chain 1"/>
    <property type="match status" value="1"/>
</dbReference>
<dbReference type="Gene3D" id="2.130.10.10">
    <property type="entry name" value="YVTN repeat-like/Quinoprotein amine dehydrogenase"/>
    <property type="match status" value="2"/>
</dbReference>
<dbReference type="InterPro" id="IPR050687">
    <property type="entry name" value="Dynein_IC"/>
</dbReference>
<dbReference type="InterPro" id="IPR015943">
    <property type="entry name" value="WD40/YVTN_repeat-like_dom_sf"/>
</dbReference>
<dbReference type="InterPro" id="IPR036322">
    <property type="entry name" value="WD40_repeat_dom_sf"/>
</dbReference>
<dbReference type="InterPro" id="IPR001680">
    <property type="entry name" value="WD40_rpt"/>
</dbReference>
<dbReference type="PANTHER" id="PTHR12442:SF11">
    <property type="entry name" value="DYNEIN AXONEMAL INTERMEDIATE CHAIN 1"/>
    <property type="match status" value="1"/>
</dbReference>
<dbReference type="PANTHER" id="PTHR12442">
    <property type="entry name" value="DYNEIN INTERMEDIATE CHAIN"/>
    <property type="match status" value="1"/>
</dbReference>
<dbReference type="Pfam" id="PF00400">
    <property type="entry name" value="WD40"/>
    <property type="match status" value="1"/>
</dbReference>
<dbReference type="SMART" id="SM00320">
    <property type="entry name" value="WD40"/>
    <property type="match status" value="4"/>
</dbReference>
<dbReference type="SUPFAM" id="SSF50978">
    <property type="entry name" value="WD40 repeat-like"/>
    <property type="match status" value="1"/>
</dbReference>
<dbReference type="PROSITE" id="PS50082">
    <property type="entry name" value="WD_REPEATS_2"/>
    <property type="match status" value="1"/>
</dbReference>
<dbReference type="PROSITE" id="PS50294">
    <property type="entry name" value="WD_REPEATS_REGION"/>
    <property type="match status" value="1"/>
</dbReference>
<organism>
    <name type="scientific">Heliocidaris crassispina</name>
    <name type="common">Sea urchin</name>
    <name type="synonym">Anthocidaris crassispina</name>
    <dbReference type="NCBI Taxonomy" id="1043166"/>
    <lineage>
        <taxon>Eukaryota</taxon>
        <taxon>Metazoa</taxon>
        <taxon>Echinodermata</taxon>
        <taxon>Eleutherozoa</taxon>
        <taxon>Echinozoa</taxon>
        <taxon>Echinoidea</taxon>
        <taxon>Euechinoidea</taxon>
        <taxon>Echinacea</taxon>
        <taxon>Camarodonta</taxon>
        <taxon>Echinidea</taxon>
        <taxon>Echinometridae</taxon>
        <taxon>Heliocidaris</taxon>
    </lineage>
</organism>
<feature type="chain" id="PRO_0000114662" description="Dynein intermediate chain 2, ciliary">
    <location>
        <begin position="1"/>
        <end position="702"/>
    </location>
</feature>
<feature type="repeat" description="WD 1">
    <location>
        <begin position="380"/>
        <end position="420"/>
    </location>
</feature>
<feature type="repeat" description="WD 2">
    <location>
        <begin position="429"/>
        <end position="472"/>
    </location>
</feature>
<feature type="repeat" description="WD 3">
    <location>
        <begin position="490"/>
        <end position="533"/>
    </location>
</feature>
<feature type="repeat" description="WD 4">
    <location>
        <begin position="537"/>
        <end position="577"/>
    </location>
</feature>
<feature type="repeat" description="WD 5">
    <location>
        <begin position="580"/>
        <end position="620"/>
    </location>
</feature>
<feature type="repeat" description="WD 6">
    <location>
        <begin position="628"/>
        <end position="667"/>
    </location>
</feature>
<feature type="region of interest" description="Disordered" evidence="2">
    <location>
        <begin position="1"/>
        <end position="64"/>
    </location>
</feature>
<feature type="region of interest" description="Disordered" evidence="2">
    <location>
        <begin position="128"/>
        <end position="226"/>
    </location>
</feature>
<feature type="region of interest" description="Disordered" evidence="2">
    <location>
        <begin position="243"/>
        <end position="272"/>
    </location>
</feature>
<feature type="compositionally biased region" description="Low complexity" evidence="2">
    <location>
        <begin position="1"/>
        <end position="11"/>
    </location>
</feature>
<feature type="compositionally biased region" description="Basic and acidic residues" evidence="2">
    <location>
        <begin position="36"/>
        <end position="52"/>
    </location>
</feature>
<feature type="compositionally biased region" description="Basic and acidic residues" evidence="2">
    <location>
        <begin position="152"/>
        <end position="176"/>
    </location>
</feature>
<feature type="compositionally biased region" description="Polar residues" evidence="2">
    <location>
        <begin position="189"/>
        <end position="206"/>
    </location>
</feature>
<feature type="compositionally biased region" description="Basic and acidic residues" evidence="2">
    <location>
        <begin position="243"/>
        <end position="261"/>
    </location>
</feature>
<proteinExistence type="evidence at transcript level"/>
<protein>
    <recommendedName>
        <fullName>Dynein intermediate chain 2, ciliary</fullName>
    </recommendedName>
</protein>
<name>DYI2_HELCR</name>